<comment type="subcellular location">
    <subcellularLocation>
        <location evidence="1">Cytoplasm</location>
    </subcellularLocation>
</comment>
<comment type="similarity">
    <text evidence="1">Belongs to the TACO1 family.</text>
</comment>
<dbReference type="EMBL" id="CP001227">
    <property type="protein sequence ID" value="ACR47678.1"/>
    <property type="molecule type" value="Genomic_DNA"/>
</dbReference>
<dbReference type="RefSeq" id="WP_012736880.1">
    <property type="nucleotide sequence ID" value="NC_012730.1"/>
</dbReference>
<dbReference type="SMR" id="C4K280"/>
<dbReference type="KEGG" id="rpk:RPR_05505"/>
<dbReference type="HOGENOM" id="CLU_062974_2_2_5"/>
<dbReference type="Proteomes" id="UP000005015">
    <property type="component" value="Chromosome"/>
</dbReference>
<dbReference type="GO" id="GO:0005737">
    <property type="term" value="C:cytoplasm"/>
    <property type="evidence" value="ECO:0007669"/>
    <property type="project" value="UniProtKB-SubCell"/>
</dbReference>
<dbReference type="GO" id="GO:0003677">
    <property type="term" value="F:DNA binding"/>
    <property type="evidence" value="ECO:0007669"/>
    <property type="project" value="UniProtKB-UniRule"/>
</dbReference>
<dbReference type="GO" id="GO:0006355">
    <property type="term" value="P:regulation of DNA-templated transcription"/>
    <property type="evidence" value="ECO:0007669"/>
    <property type="project" value="UniProtKB-UniRule"/>
</dbReference>
<dbReference type="FunFam" id="1.10.10.200:FF:000002">
    <property type="entry name" value="Probable transcriptional regulatory protein CLM62_37755"/>
    <property type="match status" value="1"/>
</dbReference>
<dbReference type="Gene3D" id="1.10.10.200">
    <property type="match status" value="1"/>
</dbReference>
<dbReference type="Gene3D" id="3.30.70.980">
    <property type="match status" value="2"/>
</dbReference>
<dbReference type="HAMAP" id="MF_00693">
    <property type="entry name" value="Transcrip_reg_TACO1"/>
    <property type="match status" value="1"/>
</dbReference>
<dbReference type="InterPro" id="IPR017856">
    <property type="entry name" value="Integrase-like_N"/>
</dbReference>
<dbReference type="InterPro" id="IPR048300">
    <property type="entry name" value="TACO1_YebC-like_2nd/3rd_dom"/>
</dbReference>
<dbReference type="InterPro" id="IPR049083">
    <property type="entry name" value="TACO1_YebC_N"/>
</dbReference>
<dbReference type="InterPro" id="IPR002876">
    <property type="entry name" value="Transcrip_reg_TACO1-like"/>
</dbReference>
<dbReference type="InterPro" id="IPR026564">
    <property type="entry name" value="Transcrip_reg_TACO1-like_dom3"/>
</dbReference>
<dbReference type="InterPro" id="IPR029072">
    <property type="entry name" value="YebC-like"/>
</dbReference>
<dbReference type="NCBIfam" id="NF001030">
    <property type="entry name" value="PRK00110.1"/>
    <property type="match status" value="1"/>
</dbReference>
<dbReference type="NCBIfam" id="NF009044">
    <property type="entry name" value="PRK12378.1"/>
    <property type="match status" value="1"/>
</dbReference>
<dbReference type="NCBIfam" id="TIGR01033">
    <property type="entry name" value="YebC/PmpR family DNA-binding transcriptional regulator"/>
    <property type="match status" value="1"/>
</dbReference>
<dbReference type="PANTHER" id="PTHR12532:SF11">
    <property type="match status" value="1"/>
</dbReference>
<dbReference type="PANTHER" id="PTHR12532">
    <property type="entry name" value="TRANSLATIONAL ACTIVATOR OF CYTOCHROME C OXIDASE 1"/>
    <property type="match status" value="1"/>
</dbReference>
<dbReference type="Pfam" id="PF20772">
    <property type="entry name" value="TACO1_YebC_N"/>
    <property type="match status" value="1"/>
</dbReference>
<dbReference type="Pfam" id="PF01709">
    <property type="entry name" value="Transcrip_reg"/>
    <property type="match status" value="1"/>
</dbReference>
<dbReference type="SUPFAM" id="SSF75625">
    <property type="entry name" value="YebC-like"/>
    <property type="match status" value="1"/>
</dbReference>
<protein>
    <recommendedName>
        <fullName evidence="1">Probable transcriptional regulatory protein RPR_05505</fullName>
    </recommendedName>
</protein>
<sequence length="253" mass="28200">MAGHSKFKNIQHRKGAQDTKRAKVFTKLIREIVIAAKTGSSNNPENNPRLRNALTAARIQNLPKERIDKALNSANDSSNNENYTEIRYEGYAQNGIAIIVEALTDNKNRTAAEVRSSFTKYGGSLGETGSVNYLFNHCGVIQYPINIASNEDVLEAVIEAGGHDIISDDTTHTIYTDIENFSKVLEFLTGKYGIPEDSYIGWIPLNTIIIDDKEKAEKLLKLVEVLEKSDDVQKVFGNYELSDDVYEIIQGEP</sequence>
<accession>C4K280</accession>
<organism>
    <name type="scientific">Rickettsia peacockii (strain Rustic)</name>
    <dbReference type="NCBI Taxonomy" id="562019"/>
    <lineage>
        <taxon>Bacteria</taxon>
        <taxon>Pseudomonadati</taxon>
        <taxon>Pseudomonadota</taxon>
        <taxon>Alphaproteobacteria</taxon>
        <taxon>Rickettsiales</taxon>
        <taxon>Rickettsiaceae</taxon>
        <taxon>Rickettsieae</taxon>
        <taxon>Rickettsia</taxon>
        <taxon>spotted fever group</taxon>
    </lineage>
</organism>
<keyword id="KW-0963">Cytoplasm</keyword>
<keyword id="KW-0238">DNA-binding</keyword>
<keyword id="KW-0804">Transcription</keyword>
<keyword id="KW-0805">Transcription regulation</keyword>
<gene>
    <name type="ordered locus">RPR_05505</name>
</gene>
<feature type="chain" id="PRO_1000212620" description="Probable transcriptional regulatory protein RPR_05505">
    <location>
        <begin position="1"/>
        <end position="253"/>
    </location>
</feature>
<evidence type="ECO:0000255" key="1">
    <source>
        <dbReference type="HAMAP-Rule" id="MF_00693"/>
    </source>
</evidence>
<name>Y5505_RICPU</name>
<reference key="1">
    <citation type="journal article" date="2009" name="PLoS ONE">
        <title>Genome sequence of the endosymbiont Rickettsia peacockii and comparison with virulent Rickettsia rickettsii: identification of virulence factors.</title>
        <authorList>
            <person name="Felsheim R.F."/>
            <person name="Kurtti T.J."/>
            <person name="Munderloh U.G."/>
        </authorList>
    </citation>
    <scope>NUCLEOTIDE SEQUENCE [LARGE SCALE GENOMIC DNA]</scope>
    <source>
        <strain>Rustic</strain>
    </source>
</reference>
<proteinExistence type="inferred from homology"/>